<accession>Q9I2W4</accession>
<gene>
    <name type="primary">cobA</name>
    <name type="ordered locus">PA1778</name>
</gene>
<keyword id="KW-0169">Cobalamin biosynthesis</keyword>
<keyword id="KW-0489">Methyltransferase</keyword>
<keyword id="KW-0627">Porphyrin biosynthesis</keyword>
<keyword id="KW-1185">Reference proteome</keyword>
<keyword id="KW-0949">S-adenosyl-L-methionine</keyword>
<keyword id="KW-0808">Transferase</keyword>
<name>SUMT_PSEAE</name>
<sequence>MSGKVWLVGAGPGDPELLTLKAVRALQDADVVMVDDLVNPSILEHCPSARLVRVGKRGGCRSTPQDFIQRLMLRHARQGRSVVRLKGGDPCIFGRAGEEAEWLARHGIDSEIVNGITAGLAGATACGIPLTYRGISRGVTLVTAHTQDDSPLAWEALARSGTTLVVYMGVARLAEIQAGLLAGGMAEDTPLAMIENATLGNQRECRSNLGELLRDAGRFALKSPAILVIGEVTRDIVSQPISLSA</sequence>
<dbReference type="EC" id="2.1.1.107" evidence="1"/>
<dbReference type="EMBL" id="AE004091">
    <property type="protein sequence ID" value="AAG05167.1"/>
    <property type="molecule type" value="Genomic_DNA"/>
</dbReference>
<dbReference type="PIR" id="H83423">
    <property type="entry name" value="H83423"/>
</dbReference>
<dbReference type="RefSeq" id="NP_250469.1">
    <property type="nucleotide sequence ID" value="NC_002516.2"/>
</dbReference>
<dbReference type="RefSeq" id="WP_003087845.1">
    <property type="nucleotide sequence ID" value="NZ_QZGE01000003.1"/>
</dbReference>
<dbReference type="SMR" id="Q9I2W4"/>
<dbReference type="STRING" id="208964.PA1778"/>
<dbReference type="PaxDb" id="208964-PA1778"/>
<dbReference type="GeneID" id="877770"/>
<dbReference type="KEGG" id="pae:PA1778"/>
<dbReference type="PATRIC" id="fig|208964.12.peg.1843"/>
<dbReference type="PseudoCAP" id="PA1778"/>
<dbReference type="HOGENOM" id="CLU_011276_7_0_6"/>
<dbReference type="InParanoid" id="Q9I2W4"/>
<dbReference type="OrthoDB" id="9815856at2"/>
<dbReference type="PhylomeDB" id="Q9I2W4"/>
<dbReference type="BioCyc" id="PAER208964:G1FZ6-1809-MONOMER"/>
<dbReference type="UniPathway" id="UPA00148">
    <property type="reaction ID" value="UER00211"/>
</dbReference>
<dbReference type="UniPathway" id="UPA00262">
    <property type="reaction ID" value="UER00211"/>
</dbReference>
<dbReference type="Proteomes" id="UP000002438">
    <property type="component" value="Chromosome"/>
</dbReference>
<dbReference type="GO" id="GO:0004851">
    <property type="term" value="F:uroporphyrin-III C-methyltransferase activity"/>
    <property type="evidence" value="ECO:0000318"/>
    <property type="project" value="GO_Central"/>
</dbReference>
<dbReference type="GO" id="GO:0009236">
    <property type="term" value="P:cobalamin biosynthetic process"/>
    <property type="evidence" value="ECO:0007669"/>
    <property type="project" value="UniProtKB-UniPathway"/>
</dbReference>
<dbReference type="GO" id="GO:0032259">
    <property type="term" value="P:methylation"/>
    <property type="evidence" value="ECO:0007669"/>
    <property type="project" value="UniProtKB-KW"/>
</dbReference>
<dbReference type="GO" id="GO:0019354">
    <property type="term" value="P:siroheme biosynthetic process"/>
    <property type="evidence" value="ECO:0000318"/>
    <property type="project" value="GO_Central"/>
</dbReference>
<dbReference type="CDD" id="cd11642">
    <property type="entry name" value="SUMT"/>
    <property type="match status" value="1"/>
</dbReference>
<dbReference type="FunFam" id="3.40.1010.10:FF:000001">
    <property type="entry name" value="Siroheme synthase"/>
    <property type="match status" value="1"/>
</dbReference>
<dbReference type="FunFam" id="3.30.950.10:FF:000010">
    <property type="entry name" value="Uroporphyrin-III C-methyltransferase"/>
    <property type="match status" value="1"/>
</dbReference>
<dbReference type="Gene3D" id="3.40.1010.10">
    <property type="entry name" value="Cobalt-precorrin-4 Transmethylase, Domain 1"/>
    <property type="match status" value="1"/>
</dbReference>
<dbReference type="Gene3D" id="3.30.950.10">
    <property type="entry name" value="Methyltransferase, Cobalt-precorrin-4 Transmethylase, Domain 2"/>
    <property type="match status" value="1"/>
</dbReference>
<dbReference type="InterPro" id="IPR000878">
    <property type="entry name" value="4pyrrol_Mease"/>
</dbReference>
<dbReference type="InterPro" id="IPR035996">
    <property type="entry name" value="4pyrrol_Methylase_sf"/>
</dbReference>
<dbReference type="InterPro" id="IPR014777">
    <property type="entry name" value="4pyrrole_Mease_sub1"/>
</dbReference>
<dbReference type="InterPro" id="IPR014776">
    <property type="entry name" value="4pyrrole_Mease_sub2"/>
</dbReference>
<dbReference type="InterPro" id="IPR006366">
    <property type="entry name" value="CobA/CysG_C"/>
</dbReference>
<dbReference type="InterPro" id="IPR050161">
    <property type="entry name" value="Siro_Cobalamin_biosynth"/>
</dbReference>
<dbReference type="InterPro" id="IPR003043">
    <property type="entry name" value="Uropor_MeTrfase_CS"/>
</dbReference>
<dbReference type="NCBIfam" id="TIGR01469">
    <property type="entry name" value="cobA_cysG_Cterm"/>
    <property type="match status" value="1"/>
</dbReference>
<dbReference type="NCBIfam" id="NF004790">
    <property type="entry name" value="PRK06136.1"/>
    <property type="match status" value="1"/>
</dbReference>
<dbReference type="PANTHER" id="PTHR45790:SF3">
    <property type="entry name" value="S-ADENOSYL-L-METHIONINE-DEPENDENT UROPORPHYRINOGEN III METHYLTRANSFERASE, CHLOROPLASTIC"/>
    <property type="match status" value="1"/>
</dbReference>
<dbReference type="PANTHER" id="PTHR45790">
    <property type="entry name" value="SIROHEME SYNTHASE-RELATED"/>
    <property type="match status" value="1"/>
</dbReference>
<dbReference type="Pfam" id="PF00590">
    <property type="entry name" value="TP_methylase"/>
    <property type="match status" value="1"/>
</dbReference>
<dbReference type="SUPFAM" id="SSF53790">
    <property type="entry name" value="Tetrapyrrole methylase"/>
    <property type="match status" value="1"/>
</dbReference>
<dbReference type="PROSITE" id="PS00839">
    <property type="entry name" value="SUMT_1"/>
    <property type="match status" value="1"/>
</dbReference>
<comment type="function">
    <text evidence="1">Catalyzes the two successive C-2 and C-7 methylation reactions involved in the conversion of uroporphyrinogen III to precorrin-2 via the intermediate formation of precorrin-1. It is a step in the biosynthesis of both cobalamin (vitamin B12) and siroheme.</text>
</comment>
<comment type="catalytic activity">
    <reaction evidence="1">
        <text>uroporphyrinogen III + 2 S-adenosyl-L-methionine = precorrin-2 + 2 S-adenosyl-L-homocysteine + H(+)</text>
        <dbReference type="Rhea" id="RHEA:32459"/>
        <dbReference type="ChEBI" id="CHEBI:15378"/>
        <dbReference type="ChEBI" id="CHEBI:57308"/>
        <dbReference type="ChEBI" id="CHEBI:57856"/>
        <dbReference type="ChEBI" id="CHEBI:58827"/>
        <dbReference type="ChEBI" id="CHEBI:59789"/>
        <dbReference type="EC" id="2.1.1.107"/>
    </reaction>
    <physiologicalReaction direction="left-to-right" evidence="1">
        <dbReference type="Rhea" id="RHEA:32460"/>
    </physiologicalReaction>
</comment>
<comment type="pathway">
    <text evidence="1">Cofactor biosynthesis; adenosylcobalamin biosynthesis; precorrin-2 from uroporphyrinogen III: step 1/1.</text>
</comment>
<comment type="pathway">
    <text evidence="1">Porphyrin-containing compound metabolism; siroheme biosynthesis; precorrin-2 from uroporphyrinogen III: step 1/1.</text>
</comment>
<comment type="similarity">
    <text evidence="2">Belongs to the precorrin methyltransferase family.</text>
</comment>
<evidence type="ECO:0000250" key="1">
    <source>
        <dbReference type="UniProtKB" id="P21631"/>
    </source>
</evidence>
<evidence type="ECO:0000305" key="2"/>
<feature type="chain" id="PRO_0000287818" description="Uroporphyrinogen-III C-methyltransferase">
    <location>
        <begin position="1"/>
        <end position="245"/>
    </location>
</feature>
<feature type="binding site" evidence="1">
    <location>
        <position position="12"/>
    </location>
    <ligand>
        <name>S-adenosyl-L-homocysteine</name>
        <dbReference type="ChEBI" id="CHEBI:57856"/>
    </ligand>
</feature>
<feature type="binding site" evidence="1">
    <location>
        <begin position="87"/>
        <end position="89"/>
    </location>
    <ligand>
        <name>S-adenosyl-L-homocysteine</name>
        <dbReference type="ChEBI" id="CHEBI:57856"/>
    </ligand>
</feature>
<feature type="binding site" evidence="1">
    <location>
        <begin position="117"/>
        <end position="118"/>
    </location>
    <ligand>
        <name>S-adenosyl-L-homocysteine</name>
        <dbReference type="ChEBI" id="CHEBI:57856"/>
    </ligand>
</feature>
<feature type="binding site" evidence="1">
    <location>
        <position position="168"/>
    </location>
    <ligand>
        <name>S-adenosyl-L-homocysteine</name>
        <dbReference type="ChEBI" id="CHEBI:57856"/>
    </ligand>
</feature>
<feature type="binding site" evidence="1">
    <location>
        <position position="197"/>
    </location>
    <ligand>
        <name>S-adenosyl-L-homocysteine</name>
        <dbReference type="ChEBI" id="CHEBI:57856"/>
    </ligand>
</feature>
<feature type="binding site" evidence="1">
    <location>
        <position position="225"/>
    </location>
    <ligand>
        <name>S-adenosyl-L-homocysteine</name>
        <dbReference type="ChEBI" id="CHEBI:57856"/>
    </ligand>
</feature>
<organism>
    <name type="scientific">Pseudomonas aeruginosa (strain ATCC 15692 / DSM 22644 / CIP 104116 / JCM 14847 / LMG 12228 / 1C / PRS 101 / PAO1)</name>
    <dbReference type="NCBI Taxonomy" id="208964"/>
    <lineage>
        <taxon>Bacteria</taxon>
        <taxon>Pseudomonadati</taxon>
        <taxon>Pseudomonadota</taxon>
        <taxon>Gammaproteobacteria</taxon>
        <taxon>Pseudomonadales</taxon>
        <taxon>Pseudomonadaceae</taxon>
        <taxon>Pseudomonas</taxon>
    </lineage>
</organism>
<reference key="1">
    <citation type="journal article" date="2000" name="Nature">
        <title>Complete genome sequence of Pseudomonas aeruginosa PAO1, an opportunistic pathogen.</title>
        <authorList>
            <person name="Stover C.K."/>
            <person name="Pham X.-Q.T."/>
            <person name="Erwin A.L."/>
            <person name="Mizoguchi S.D."/>
            <person name="Warrener P."/>
            <person name="Hickey M.J."/>
            <person name="Brinkman F.S.L."/>
            <person name="Hufnagle W.O."/>
            <person name="Kowalik D.J."/>
            <person name="Lagrou M."/>
            <person name="Garber R.L."/>
            <person name="Goltry L."/>
            <person name="Tolentino E."/>
            <person name="Westbrock-Wadman S."/>
            <person name="Yuan Y."/>
            <person name="Brody L.L."/>
            <person name="Coulter S.N."/>
            <person name="Folger K.R."/>
            <person name="Kas A."/>
            <person name="Larbig K."/>
            <person name="Lim R.M."/>
            <person name="Smith K.A."/>
            <person name="Spencer D.H."/>
            <person name="Wong G.K.-S."/>
            <person name="Wu Z."/>
            <person name="Paulsen I.T."/>
            <person name="Reizer J."/>
            <person name="Saier M.H. Jr."/>
            <person name="Hancock R.E.W."/>
            <person name="Lory S."/>
            <person name="Olson M.V."/>
        </authorList>
    </citation>
    <scope>NUCLEOTIDE SEQUENCE [LARGE SCALE GENOMIC DNA]</scope>
    <source>
        <strain>ATCC 15692 / DSM 22644 / CIP 104116 / JCM 14847 / LMG 12228 / 1C / PRS 101 / PAO1</strain>
    </source>
</reference>
<proteinExistence type="inferred from homology"/>
<protein>
    <recommendedName>
        <fullName>Uroporphyrinogen-III C-methyltransferase</fullName>
        <shortName>Urogen III methylase</shortName>
        <ecNumber evidence="1">2.1.1.107</ecNumber>
    </recommendedName>
    <alternativeName>
        <fullName>S-adenosyl-L-methionine:uroporphyrinogen III methyltransferase</fullName>
        <shortName>SUMT</shortName>
    </alternativeName>
    <alternativeName>
        <fullName>Uroporphyrinogen III methylase</fullName>
        <shortName>UROM</shortName>
    </alternativeName>
</protein>